<evidence type="ECO:0000255" key="1"/>
<evidence type="ECO:0000305" key="2"/>
<keyword id="KW-1043">Host membrane</keyword>
<keyword id="KW-0472">Membrane</keyword>
<keyword id="KW-1185">Reference proteome</keyword>
<keyword id="KW-0812">Transmembrane</keyword>
<keyword id="KW-1133">Transmembrane helix</keyword>
<gene>
    <name type="primary">p24</name>
    <name type="synonym">ORF4</name>
</gene>
<organism>
    <name type="scientific">Citrus leprosis virus C (isolate Citrus sinesis/Brazil/Cordeiropolis/2003)</name>
    <name type="common">CiLV-C</name>
    <dbReference type="NCBI Taxonomy" id="686950"/>
    <lineage>
        <taxon>Viruses</taxon>
        <taxon>Riboviria</taxon>
        <taxon>Orthornavirae</taxon>
        <taxon>Kitrinoviricota</taxon>
        <taxon>Alsuviricetes</taxon>
        <taxon>Martellivirales</taxon>
        <taxon>Kitaviridae</taxon>
        <taxon>Cilevirus</taxon>
        <taxon>Cilevirus leprosis</taxon>
    </lineage>
</organism>
<accession>Q1KZ54</accession>
<proteinExistence type="predicted"/>
<reference key="1">
    <citation type="journal article" date="2006" name="J. Gen. Virol.">
        <title>Complete nucleotide sequence, genomic organization and phylogenetic analysis of Citrus leprosis virus cytoplasmic type.</title>
        <authorList>
            <person name="Locali-Fabris E.C."/>
            <person name="Freitas-Astua J."/>
            <person name="Souza A.A."/>
            <person name="Takita M.A."/>
            <person name="Astua-Monge G."/>
            <person name="Antonioli-Luizon R."/>
            <person name="Rodrigues V."/>
            <person name="Targon M.L."/>
            <person name="Machado M.A."/>
        </authorList>
    </citation>
    <scope>NUCLEOTIDE SEQUENCE [GENOMIC RNA]</scope>
</reference>
<reference key="2">
    <citation type="submission" date="2006-01" db="EMBL/GenBank/DDBJ databases">
        <authorList>
            <person name="Locali E.C."/>
            <person name="Freitas-Astua J."/>
            <person name="Souza A.A."/>
            <person name="Takita M.A."/>
            <person name="Astua-Monge G."/>
            <person name="Antonioli-Luizon R."/>
            <person name="Rodrigues V."/>
            <person name="Targon M.L.P.N."/>
            <person name="Machado M.A."/>
        </authorList>
    </citation>
    <scope>NUCLEOTIDE SEQUENCE [GENOMIC RNA]</scope>
</reference>
<reference key="3">
    <citation type="submission" date="2006-02" db="EMBL/GenBank/DDBJ databases">
        <title>Citrus leprosis symptoms can be associated with the presence of two different viruses, cytoplasmic and nuclear, the former having a multipartite RNA genome.</title>
        <authorList>
            <person name="Guerra A.S."/>
            <person name="Manjunath K.L."/>
            <person name="Rangel E."/>
            <person name="Brlansky R.H."/>
            <person name="Lee R.F."/>
        </authorList>
    </citation>
    <scope>NUCLEOTIDE SEQUENCE [GENOMIC RNA]</scope>
</reference>
<reference key="4">
    <citation type="journal article" date="2006" name="Virus Genes">
        <title>The complete nucleotide sequence and genomic organization of Citrus Leprosis associated Virus, Cytoplasmatic type (CiLV-C).</title>
        <authorList>
            <person name="Pascon R.C."/>
            <person name="Kitajima J.P."/>
            <person name="Breton M.C."/>
            <person name="Assumpcao L."/>
            <person name="Greggio C."/>
            <person name="Zanca A.S."/>
            <person name="Okura V.K."/>
            <person name="Alegria M.C."/>
            <person name="Camargo M.E."/>
            <person name="Silva G.G."/>
            <person name="Cardozo J.C."/>
            <person name="Vallim M.A."/>
            <person name="Franco S.F."/>
            <person name="Silva V.H."/>
            <person name="Jordao H. Jr."/>
            <person name="Oliveira F."/>
            <person name="Giachetto P.F."/>
            <person name="Ferrari F."/>
            <person name="Aguilar-Vildoso C.I."/>
            <person name="Franchiscini F.J."/>
            <person name="Silva J.M."/>
            <person name="Arruda P."/>
            <person name="Ferro J.A."/>
            <person name="Reinach F."/>
            <person name="da Silva A.C."/>
        </authorList>
    </citation>
    <scope>NUCLEOTIDE SEQUENCE [GENOMIC RNA]</scope>
</reference>
<reference key="5">
    <citation type="submission" date="2006-06" db="EMBL/GenBank/DDBJ databases">
        <title>Isolated nucleic acids molecules from the genome of citrus leprosis virus and uses thereof.</title>
        <authorList>
            <person name="Pascon R.C."/>
            <person name="Silva A.C.R."/>
        </authorList>
    </citation>
    <scope>NUCLEOTIDE SEQUENCE [GENOMIC RNA]</scope>
</reference>
<reference key="6">
    <citation type="submission" date="2005-08" db="EMBL/GenBank/DDBJ databases">
        <authorList>
            <person name="Kitajima J.F.W."/>
            <person name="Martins A.R."/>
        </authorList>
    </citation>
    <scope>NUCLEOTIDE SEQUENCE [GENOMIC RNA]</scope>
</reference>
<dbReference type="EMBL" id="DQ157465">
    <property type="protein sequence ID" value="ABA42872.1"/>
    <property type="molecule type" value="Genomic_RNA"/>
</dbReference>
<dbReference type="EMBL" id="DQ352195">
    <property type="protein sequence ID" value="ABC75826.1"/>
    <property type="molecule type" value="Genomic_RNA"/>
</dbReference>
<dbReference type="EMBL" id="DQ388513">
    <property type="protein sequence ID" value="ABD59465.1"/>
    <property type="molecule type" value="Genomic_RNA"/>
</dbReference>
<dbReference type="RefSeq" id="YP_654543.1">
    <property type="nucleotide sequence ID" value="NC_008170.1"/>
</dbReference>
<dbReference type="GeneID" id="4155848"/>
<dbReference type="KEGG" id="vg:4155848"/>
<dbReference type="Proteomes" id="UP000001101">
    <property type="component" value="Genome"/>
</dbReference>
<dbReference type="GO" id="GO:0033644">
    <property type="term" value="C:host cell membrane"/>
    <property type="evidence" value="ECO:0007669"/>
    <property type="project" value="UniProtKB-SubCell"/>
</dbReference>
<dbReference type="GO" id="GO:0016020">
    <property type="term" value="C:membrane"/>
    <property type="evidence" value="ECO:0007669"/>
    <property type="project" value="UniProtKB-KW"/>
</dbReference>
<dbReference type="InterPro" id="IPR032441">
    <property type="entry name" value="SP24"/>
</dbReference>
<dbReference type="Pfam" id="PF16504">
    <property type="entry name" value="SP24"/>
    <property type="match status" value="1"/>
</dbReference>
<feature type="chain" id="PRO_0000404538" description="Uncharacterized protein p24">
    <location>
        <begin position="1"/>
        <end position="214"/>
    </location>
</feature>
<feature type="transmembrane region" description="Helical" evidence="1">
    <location>
        <begin position="43"/>
        <end position="63"/>
    </location>
</feature>
<feature type="transmembrane region" description="Helical" evidence="1">
    <location>
        <begin position="84"/>
        <end position="104"/>
    </location>
</feature>
<feature type="transmembrane region" description="Helical" evidence="1">
    <location>
        <begin position="116"/>
        <end position="136"/>
    </location>
</feature>
<feature type="transmembrane region" description="Helical" evidence="1">
    <location>
        <begin position="150"/>
        <end position="170"/>
    </location>
</feature>
<protein>
    <recommendedName>
        <fullName>Uncharacterized protein p24</fullName>
    </recommendedName>
</protein>
<organismHost>
    <name type="scientific">Citrus sinensis</name>
    <name type="common">Sweet orange</name>
    <name type="synonym">Citrus aurantium var. sinensis</name>
    <dbReference type="NCBI Taxonomy" id="2711"/>
</organismHost>
<comment type="subcellular location">
    <subcellularLocation>
        <location evidence="2">Host membrane</location>
        <topology evidence="2">Multi-pass membrane protein</topology>
    </subcellularLocation>
</comment>
<name>P24_CILVC</name>
<sequence length="214" mass="24559">MDAQLLQANKRLLRRAANVRQRYKMLATESFVADIKQILLRFIQKPNVIIMYISVLVLFAAHIDSNTHDILDDLAAQFPNNTFIEWAKSNFFRICGALVFIPVIIDTEEKHRNYLALVIFVFLMGFPQRSIMEYFIYSISFHVYAKAKHPVTRIFIIGAAVFSCVMFGIFTNEQLRKLYAELPKVPTHPVAVNRVEKVANRASRVSTEGTVNFG</sequence>